<accession>Q01KC2</accession>
<accession>B8AUI7</accession>
<sequence length="368" mass="40593">MALVTNVCEYEELAKHKLPKMVYDFYAVDAEDQWTLRENSEAFSRILFQPVVLVDVSCIDMSMSVLGYNISMPIMIAPTALHKLAHPEGELATARAAAAAETIMTLSSWSSCSIEEVNLAGPGVRFFQLSIYKDRNLVQQLIQRAEKAGYKAIVLTVDAPWLGRREADVKNRFTLPQNVMLKIFEGLDQGKIDETNGSGLAAYVASQIDRSFSWKDIKWLQTVTSLPVLVKGIITAQDTRIAIEYGAAGIIMSNHGGRQLDYLPATISCLEEVVREANGRVPVFIDSGFRRGTDVFKALALGASGVFIGRPVLFSLAIDGEAGVRNALRMLRDELEITMALSGCTSVKEITRGHVVTESDRIRRCSRL</sequence>
<organism>
    <name type="scientific">Oryza sativa subsp. indica</name>
    <name type="common">Rice</name>
    <dbReference type="NCBI Taxonomy" id="39946"/>
    <lineage>
        <taxon>Eukaryota</taxon>
        <taxon>Viridiplantae</taxon>
        <taxon>Streptophyta</taxon>
        <taxon>Embryophyta</taxon>
        <taxon>Tracheophyta</taxon>
        <taxon>Spermatophyta</taxon>
        <taxon>Magnoliopsida</taxon>
        <taxon>Liliopsida</taxon>
        <taxon>Poales</taxon>
        <taxon>Poaceae</taxon>
        <taxon>BOP clade</taxon>
        <taxon>Oryzoideae</taxon>
        <taxon>Oryzeae</taxon>
        <taxon>Oryzinae</taxon>
        <taxon>Oryza</taxon>
        <taxon>Oryza sativa</taxon>
    </lineage>
</organism>
<reference key="1">
    <citation type="journal article" date="2002" name="Nature">
        <title>Sequence and analysis of rice chromosome 4.</title>
        <authorList>
            <person name="Feng Q."/>
            <person name="Zhang Y."/>
            <person name="Hao P."/>
            <person name="Wang S."/>
            <person name="Fu G."/>
            <person name="Huang Y."/>
            <person name="Li Y."/>
            <person name="Zhu J."/>
            <person name="Liu Y."/>
            <person name="Hu X."/>
            <person name="Jia P."/>
            <person name="Zhang Y."/>
            <person name="Zhao Q."/>
            <person name="Ying K."/>
            <person name="Yu S."/>
            <person name="Tang Y."/>
            <person name="Weng Q."/>
            <person name="Zhang L."/>
            <person name="Lu Y."/>
            <person name="Mu J."/>
            <person name="Lu Y."/>
            <person name="Zhang L.S."/>
            <person name="Yu Z."/>
            <person name="Fan D."/>
            <person name="Liu X."/>
            <person name="Lu T."/>
            <person name="Li C."/>
            <person name="Wu Y."/>
            <person name="Sun T."/>
            <person name="Lei H."/>
            <person name="Li T."/>
            <person name="Hu H."/>
            <person name="Guan J."/>
            <person name="Wu M."/>
            <person name="Zhang R."/>
            <person name="Zhou B."/>
            <person name="Chen Z."/>
            <person name="Chen L."/>
            <person name="Jin Z."/>
            <person name="Wang R."/>
            <person name="Yin H."/>
            <person name="Cai Z."/>
            <person name="Ren S."/>
            <person name="Lv G."/>
            <person name="Gu W."/>
            <person name="Zhu G."/>
            <person name="Tu Y."/>
            <person name="Jia J."/>
            <person name="Zhang Y."/>
            <person name="Chen J."/>
            <person name="Kang H."/>
            <person name="Chen X."/>
            <person name="Shao C."/>
            <person name="Sun Y."/>
            <person name="Hu Q."/>
            <person name="Zhang X."/>
            <person name="Zhang W."/>
            <person name="Wang L."/>
            <person name="Ding C."/>
            <person name="Sheng H."/>
            <person name="Gu J."/>
            <person name="Chen S."/>
            <person name="Ni L."/>
            <person name="Zhu F."/>
            <person name="Chen W."/>
            <person name="Lan L."/>
            <person name="Lai Y."/>
            <person name="Cheng Z."/>
            <person name="Gu M."/>
            <person name="Jiang J."/>
            <person name="Li J."/>
            <person name="Hong G."/>
            <person name="Xue Y."/>
            <person name="Han B."/>
        </authorList>
    </citation>
    <scope>NUCLEOTIDE SEQUENCE [LARGE SCALE GENOMIC DNA]</scope>
    <source>
        <strain>cv. Guang-Lu-Ai No.4</strain>
    </source>
</reference>
<reference key="2">
    <citation type="journal article" date="2005" name="PLoS Biol.">
        <title>The genomes of Oryza sativa: a history of duplications.</title>
        <authorList>
            <person name="Yu J."/>
            <person name="Wang J."/>
            <person name="Lin W."/>
            <person name="Li S."/>
            <person name="Li H."/>
            <person name="Zhou J."/>
            <person name="Ni P."/>
            <person name="Dong W."/>
            <person name="Hu S."/>
            <person name="Zeng C."/>
            <person name="Zhang J."/>
            <person name="Zhang Y."/>
            <person name="Li R."/>
            <person name="Xu Z."/>
            <person name="Li S."/>
            <person name="Li X."/>
            <person name="Zheng H."/>
            <person name="Cong L."/>
            <person name="Lin L."/>
            <person name="Yin J."/>
            <person name="Geng J."/>
            <person name="Li G."/>
            <person name="Shi J."/>
            <person name="Liu J."/>
            <person name="Lv H."/>
            <person name="Li J."/>
            <person name="Wang J."/>
            <person name="Deng Y."/>
            <person name="Ran L."/>
            <person name="Shi X."/>
            <person name="Wang X."/>
            <person name="Wu Q."/>
            <person name="Li C."/>
            <person name="Ren X."/>
            <person name="Wang J."/>
            <person name="Wang X."/>
            <person name="Li D."/>
            <person name="Liu D."/>
            <person name="Zhang X."/>
            <person name="Ji Z."/>
            <person name="Zhao W."/>
            <person name="Sun Y."/>
            <person name="Zhang Z."/>
            <person name="Bao J."/>
            <person name="Han Y."/>
            <person name="Dong L."/>
            <person name="Ji J."/>
            <person name="Chen P."/>
            <person name="Wu S."/>
            <person name="Liu J."/>
            <person name="Xiao Y."/>
            <person name="Bu D."/>
            <person name="Tan J."/>
            <person name="Yang L."/>
            <person name="Ye C."/>
            <person name="Zhang J."/>
            <person name="Xu J."/>
            <person name="Zhou Y."/>
            <person name="Yu Y."/>
            <person name="Zhang B."/>
            <person name="Zhuang S."/>
            <person name="Wei H."/>
            <person name="Liu B."/>
            <person name="Lei M."/>
            <person name="Yu H."/>
            <person name="Li Y."/>
            <person name="Xu H."/>
            <person name="Wei S."/>
            <person name="He X."/>
            <person name="Fang L."/>
            <person name="Zhang Z."/>
            <person name="Zhang Y."/>
            <person name="Huang X."/>
            <person name="Su Z."/>
            <person name="Tong W."/>
            <person name="Li J."/>
            <person name="Tong Z."/>
            <person name="Li S."/>
            <person name="Ye J."/>
            <person name="Wang L."/>
            <person name="Fang L."/>
            <person name="Lei T."/>
            <person name="Chen C.-S."/>
            <person name="Chen H.-C."/>
            <person name="Xu Z."/>
            <person name="Li H."/>
            <person name="Huang H."/>
            <person name="Zhang F."/>
            <person name="Xu H."/>
            <person name="Li N."/>
            <person name="Zhao C."/>
            <person name="Li S."/>
            <person name="Dong L."/>
            <person name="Huang Y."/>
            <person name="Li L."/>
            <person name="Xi Y."/>
            <person name="Qi Q."/>
            <person name="Li W."/>
            <person name="Zhang B."/>
            <person name="Hu W."/>
            <person name="Zhang Y."/>
            <person name="Tian X."/>
            <person name="Jiao Y."/>
            <person name="Liang X."/>
            <person name="Jin J."/>
            <person name="Gao L."/>
            <person name="Zheng W."/>
            <person name="Hao B."/>
            <person name="Liu S.-M."/>
            <person name="Wang W."/>
            <person name="Yuan L."/>
            <person name="Cao M."/>
            <person name="McDermott J."/>
            <person name="Samudrala R."/>
            <person name="Wang J."/>
            <person name="Wong G.K.-S."/>
            <person name="Yang H."/>
        </authorList>
    </citation>
    <scope>NUCLEOTIDE SEQUENCE [LARGE SCALE GENOMIC DNA]</scope>
    <source>
        <strain>cv. 93-11</strain>
    </source>
</reference>
<dbReference type="EC" id="1.1.3.15" evidence="1"/>
<dbReference type="EMBL" id="CR855144">
    <property type="protein sequence ID" value="CAH66797.1"/>
    <property type="status" value="ALT_SEQ"/>
    <property type="molecule type" value="Genomic_DNA"/>
</dbReference>
<dbReference type="EMBL" id="CM000129">
    <property type="protein sequence ID" value="EEC78044.1"/>
    <property type="status" value="ALT_SEQ"/>
    <property type="molecule type" value="Genomic_DNA"/>
</dbReference>
<dbReference type="SMR" id="Q01KC2"/>
<dbReference type="STRING" id="39946.Q01KC2"/>
<dbReference type="UniPathway" id="UPA00951">
    <property type="reaction ID" value="UER00912"/>
</dbReference>
<dbReference type="Proteomes" id="UP000007015">
    <property type="component" value="Chromosome 4"/>
</dbReference>
<dbReference type="GO" id="GO:0005777">
    <property type="term" value="C:peroxisome"/>
    <property type="evidence" value="ECO:0000250"/>
    <property type="project" value="UniProtKB"/>
</dbReference>
<dbReference type="GO" id="GO:0003973">
    <property type="term" value="F:(S)-2-hydroxy-acid oxidase activity"/>
    <property type="evidence" value="ECO:0000250"/>
    <property type="project" value="UniProtKB"/>
</dbReference>
<dbReference type="GO" id="GO:0010181">
    <property type="term" value="F:FMN binding"/>
    <property type="evidence" value="ECO:0007669"/>
    <property type="project" value="InterPro"/>
</dbReference>
<dbReference type="GO" id="GO:0009854">
    <property type="term" value="P:oxidative photosynthetic carbon pathway"/>
    <property type="evidence" value="ECO:0007669"/>
    <property type="project" value="UniProtKB-KW"/>
</dbReference>
<dbReference type="GO" id="GO:0009853">
    <property type="term" value="P:photorespiration"/>
    <property type="evidence" value="ECO:0000250"/>
    <property type="project" value="UniProtKB"/>
</dbReference>
<dbReference type="GO" id="GO:0010109">
    <property type="term" value="P:regulation of photosynthesis"/>
    <property type="evidence" value="ECO:0000250"/>
    <property type="project" value="UniProtKB"/>
</dbReference>
<dbReference type="GO" id="GO:0051707">
    <property type="term" value="P:response to other organism"/>
    <property type="evidence" value="ECO:0007669"/>
    <property type="project" value="UniProtKB-ARBA"/>
</dbReference>
<dbReference type="GO" id="GO:0046718">
    <property type="term" value="P:symbiont entry into host cell"/>
    <property type="evidence" value="ECO:0000250"/>
    <property type="project" value="UniProtKB"/>
</dbReference>
<dbReference type="CDD" id="cd02809">
    <property type="entry name" value="alpha_hydroxyacid_oxid_FMN"/>
    <property type="match status" value="1"/>
</dbReference>
<dbReference type="FunFam" id="3.20.20.70:FF:000204">
    <property type="entry name" value="Peroxisomal (S)-2-hydroxy-acid oxidase GLO4"/>
    <property type="match status" value="1"/>
</dbReference>
<dbReference type="Gene3D" id="3.20.20.70">
    <property type="entry name" value="Aldolase class I"/>
    <property type="match status" value="1"/>
</dbReference>
<dbReference type="InterPro" id="IPR013785">
    <property type="entry name" value="Aldolase_TIM"/>
</dbReference>
<dbReference type="InterPro" id="IPR012133">
    <property type="entry name" value="Alpha-hydoxy_acid_DH_FMN"/>
</dbReference>
<dbReference type="InterPro" id="IPR000262">
    <property type="entry name" value="FMN-dep_DH"/>
</dbReference>
<dbReference type="InterPro" id="IPR037396">
    <property type="entry name" value="FMN_HAD"/>
</dbReference>
<dbReference type="InterPro" id="IPR008259">
    <property type="entry name" value="FMN_hydac_DH_AS"/>
</dbReference>
<dbReference type="PANTHER" id="PTHR10578:SF72">
    <property type="entry name" value="GLYCOLATE OXIDASE 2"/>
    <property type="match status" value="1"/>
</dbReference>
<dbReference type="PANTHER" id="PTHR10578">
    <property type="entry name" value="S -2-HYDROXY-ACID OXIDASE-RELATED"/>
    <property type="match status" value="1"/>
</dbReference>
<dbReference type="Pfam" id="PF01070">
    <property type="entry name" value="FMN_dh"/>
    <property type="match status" value="1"/>
</dbReference>
<dbReference type="PIRSF" id="PIRSF000138">
    <property type="entry name" value="Al-hdrx_acd_dh"/>
    <property type="match status" value="1"/>
</dbReference>
<dbReference type="SUPFAM" id="SSF51395">
    <property type="entry name" value="FMN-linked oxidoreductases"/>
    <property type="match status" value="1"/>
</dbReference>
<dbReference type="PROSITE" id="PS00557">
    <property type="entry name" value="FMN_HYDROXY_ACID_DH_1"/>
    <property type="match status" value="1"/>
</dbReference>
<dbReference type="PROSITE" id="PS51349">
    <property type="entry name" value="FMN_HYDROXY_ACID_DH_2"/>
    <property type="match status" value="1"/>
</dbReference>
<name>GLO2_ORYSI</name>
<protein>
    <recommendedName>
        <fullName>Glycolate oxidase 2</fullName>
        <shortName>GOX 2</shortName>
        <shortName>OsGLO2</shortName>
        <ecNumber evidence="1">1.1.3.15</ecNumber>
    </recommendedName>
    <alternativeName>
        <fullName>Peroxisomal (S)-2-hydroxy-acid oxidase GLO2</fullName>
    </alternativeName>
    <alternativeName>
        <fullName>Short chain alpha-hydroxy acid oxidase GLO2</fullName>
    </alternativeName>
</protein>
<proteinExistence type="inferred from homology"/>
<evidence type="ECO:0000250" key="1">
    <source>
        <dbReference type="UniProtKB" id="P05414"/>
    </source>
</evidence>
<evidence type="ECO:0000250" key="2">
    <source>
        <dbReference type="UniProtKB" id="Q9UJM8"/>
    </source>
</evidence>
<evidence type="ECO:0000255" key="3"/>
<evidence type="ECO:0000255" key="4">
    <source>
        <dbReference type="PROSITE-ProRule" id="PRU00683"/>
    </source>
</evidence>
<evidence type="ECO:0000305" key="5"/>
<gene>
    <name type="primary">GLO2</name>
    <name type="ORF">H0215F08.8</name>
    <name type="ORF">OsI_17480</name>
</gene>
<keyword id="KW-0285">Flavoprotein</keyword>
<keyword id="KW-0288">FMN</keyword>
<keyword id="KW-0323">Glycolate pathway</keyword>
<keyword id="KW-0560">Oxidoreductase</keyword>
<keyword id="KW-0576">Peroxisome</keyword>
<keyword id="KW-0601">Photorespiration</keyword>
<keyword id="KW-1185">Reference proteome</keyword>
<comment type="function">
    <text evidence="1">Catalyzes the oxidation of glycolate to glyoxylate, with a reduction of O2 to H2O2. Is a key enzyme in photorespiration in green plants.</text>
</comment>
<comment type="catalytic activity">
    <reaction evidence="1">
        <text>glycolate + O2 = glyoxylate + H2O2</text>
        <dbReference type="Rhea" id="RHEA:25311"/>
        <dbReference type="ChEBI" id="CHEBI:15379"/>
        <dbReference type="ChEBI" id="CHEBI:16240"/>
        <dbReference type="ChEBI" id="CHEBI:29805"/>
        <dbReference type="ChEBI" id="CHEBI:36655"/>
        <dbReference type="EC" id="1.1.3.15"/>
    </reaction>
    <physiologicalReaction direction="left-to-right" evidence="1">
        <dbReference type="Rhea" id="RHEA:25312"/>
    </physiologicalReaction>
</comment>
<comment type="cofactor">
    <cofactor evidence="1">
        <name>FMN</name>
        <dbReference type="ChEBI" id="CHEBI:58210"/>
    </cofactor>
    <text evidence="1">Binds 1 FMN per subunit.</text>
</comment>
<comment type="pathway">
    <text evidence="1">Photosynthesis; photorespiration; glycine from 2-phosphoglycolate: step 2/3.</text>
</comment>
<comment type="subunit">
    <text evidence="1">Homotetramer.</text>
</comment>
<comment type="subcellular location">
    <subcellularLocation>
        <location evidence="1">Peroxisome</location>
    </subcellularLocation>
</comment>
<comment type="similarity">
    <text evidence="4">Belongs to the FMN-dependent alpha-hydroxy acid dehydrogenase family.</text>
</comment>
<comment type="sequence caution" evidence="5">
    <conflict type="erroneous gene model prediction">
        <sequence resource="EMBL-CDS" id="CAH66797"/>
    </conflict>
</comment>
<comment type="sequence caution" evidence="5">
    <conflict type="erroneous gene model prediction">
        <sequence resource="EMBL-CDS" id="EEC78044"/>
    </conflict>
</comment>
<feature type="chain" id="PRO_0000403412" description="Glycolate oxidase 2">
    <location>
        <begin position="1"/>
        <end position="368"/>
    </location>
</feature>
<feature type="domain" description="FMN hydroxy acid dehydrogenase" evidence="4">
    <location>
        <begin position="1"/>
        <end position="360"/>
    </location>
</feature>
<feature type="short sequence motif" description="Microbody targeting signal" evidence="3">
    <location>
        <begin position="366"/>
        <end position="368"/>
    </location>
</feature>
<feature type="active site" description="Proton acceptor" evidence="1">
    <location>
        <position position="255"/>
    </location>
</feature>
<feature type="binding site" evidence="1">
    <location>
        <begin position="78"/>
        <end position="80"/>
    </location>
    <ligand>
        <name>FMN</name>
        <dbReference type="ChEBI" id="CHEBI:58210"/>
    </ligand>
</feature>
<feature type="binding site" evidence="1">
    <location>
        <position position="107"/>
    </location>
    <ligand>
        <name>FMN</name>
        <dbReference type="ChEBI" id="CHEBI:58210"/>
    </ligand>
</feature>
<feature type="binding site" evidence="1">
    <location>
        <begin position="128"/>
        <end position="130"/>
    </location>
    <ligand>
        <name>FMN</name>
        <dbReference type="ChEBI" id="CHEBI:58210"/>
    </ligand>
</feature>
<feature type="binding site" evidence="1">
    <location>
        <position position="156"/>
    </location>
    <ligand>
        <name>FMN</name>
        <dbReference type="ChEBI" id="CHEBI:58210"/>
    </ligand>
</feature>
<feature type="binding site" evidence="2">
    <location>
        <position position="165"/>
    </location>
    <ligand>
        <name>glyoxylate</name>
        <dbReference type="ChEBI" id="CHEBI:36655"/>
    </ligand>
</feature>
<feature type="binding site" evidence="1">
    <location>
        <position position="231"/>
    </location>
    <ligand>
        <name>FMN</name>
        <dbReference type="ChEBI" id="CHEBI:58210"/>
    </ligand>
</feature>
<feature type="binding site" evidence="1">
    <location>
        <position position="253"/>
    </location>
    <ligand>
        <name>FMN</name>
        <dbReference type="ChEBI" id="CHEBI:58210"/>
    </ligand>
</feature>
<feature type="binding site" evidence="2">
    <location>
        <position position="255"/>
    </location>
    <ligand>
        <name>glyoxylate</name>
        <dbReference type="ChEBI" id="CHEBI:36655"/>
    </ligand>
</feature>
<feature type="binding site" evidence="2">
    <location>
        <position position="258"/>
    </location>
    <ligand>
        <name>glyoxylate</name>
        <dbReference type="ChEBI" id="CHEBI:36655"/>
    </ligand>
</feature>
<feature type="binding site" evidence="1">
    <location>
        <begin position="286"/>
        <end position="290"/>
    </location>
    <ligand>
        <name>FMN</name>
        <dbReference type="ChEBI" id="CHEBI:58210"/>
    </ligand>
</feature>
<feature type="binding site" evidence="1">
    <location>
        <begin position="309"/>
        <end position="310"/>
    </location>
    <ligand>
        <name>FMN</name>
        <dbReference type="ChEBI" id="CHEBI:58210"/>
    </ligand>
</feature>
<feature type="site" description="Involved in determining the substrate specificity of glycolate oxidase" evidence="1">
    <location>
        <position position="109"/>
    </location>
</feature>